<protein>
    <recommendedName>
        <fullName evidence="7">Auxin-responsive protein SAUR28</fullName>
    </recommendedName>
    <alternativeName>
        <fullName evidence="5">Protein SMALL AUXIN UP RNA 28</fullName>
    </alternativeName>
</protein>
<dbReference type="EMBL" id="AC009540">
    <property type="protein sequence ID" value="AAF00635.1"/>
    <property type="molecule type" value="Genomic_DNA"/>
</dbReference>
<dbReference type="EMBL" id="CP002686">
    <property type="protein sequence ID" value="AEE74000.1"/>
    <property type="molecule type" value="Genomic_DNA"/>
</dbReference>
<dbReference type="EMBL" id="AK118860">
    <property type="protein sequence ID" value="BAC43447.1"/>
    <property type="molecule type" value="mRNA"/>
</dbReference>
<dbReference type="EMBL" id="BT005420">
    <property type="protein sequence ID" value="AAO63840.1"/>
    <property type="molecule type" value="mRNA"/>
</dbReference>
<dbReference type="RefSeq" id="NP_187033.1">
    <property type="nucleotide sequence ID" value="NM_111254.3"/>
</dbReference>
<dbReference type="FunCoup" id="Q9SRW0">
    <property type="interactions" value="289"/>
</dbReference>
<dbReference type="STRING" id="3702.Q9SRW0"/>
<dbReference type="PaxDb" id="3702-AT3G03830.1"/>
<dbReference type="EnsemblPlants" id="AT3G03830.1">
    <property type="protein sequence ID" value="AT3G03830.1"/>
    <property type="gene ID" value="AT3G03830"/>
</dbReference>
<dbReference type="GeneID" id="821123"/>
<dbReference type="Gramene" id="AT3G03830.1">
    <property type="protein sequence ID" value="AT3G03830.1"/>
    <property type="gene ID" value="AT3G03830"/>
</dbReference>
<dbReference type="KEGG" id="ath:AT3G03830"/>
<dbReference type="Araport" id="AT3G03830"/>
<dbReference type="TAIR" id="AT3G03830">
    <property type="gene designation" value="SAUR28"/>
</dbReference>
<dbReference type="HOGENOM" id="CLU_098106_3_0_1"/>
<dbReference type="InParanoid" id="Q9SRW0"/>
<dbReference type="OMA" id="HQYSYRT"/>
<dbReference type="PhylomeDB" id="Q9SRW0"/>
<dbReference type="PRO" id="PR:Q9SRW0"/>
<dbReference type="Proteomes" id="UP000006548">
    <property type="component" value="Chromosome 3"/>
</dbReference>
<dbReference type="ExpressionAtlas" id="Q9SRW0">
    <property type="expression patterns" value="baseline and differential"/>
</dbReference>
<dbReference type="GO" id="GO:0005886">
    <property type="term" value="C:plasma membrane"/>
    <property type="evidence" value="ECO:0007669"/>
    <property type="project" value="UniProtKB-SubCell"/>
</dbReference>
<dbReference type="GO" id="GO:0009734">
    <property type="term" value="P:auxin-activated signaling pathway"/>
    <property type="evidence" value="ECO:0007669"/>
    <property type="project" value="UniProtKB-KW"/>
</dbReference>
<dbReference type="GO" id="GO:0030307">
    <property type="term" value="P:positive regulation of cell growth"/>
    <property type="evidence" value="ECO:0000250"/>
    <property type="project" value="UniProtKB"/>
</dbReference>
<dbReference type="GO" id="GO:2000012">
    <property type="term" value="P:regulation of auxin polar transport"/>
    <property type="evidence" value="ECO:0000250"/>
    <property type="project" value="UniProtKB"/>
</dbReference>
<dbReference type="GO" id="GO:0009646">
    <property type="term" value="P:response to absence of light"/>
    <property type="evidence" value="ECO:0000270"/>
    <property type="project" value="UniProtKB"/>
</dbReference>
<dbReference type="GO" id="GO:0009733">
    <property type="term" value="P:response to auxin"/>
    <property type="evidence" value="ECO:0000270"/>
    <property type="project" value="UniProtKB"/>
</dbReference>
<dbReference type="GO" id="GO:0009266">
    <property type="term" value="P:response to temperature stimulus"/>
    <property type="evidence" value="ECO:0000315"/>
    <property type="project" value="UniProtKB"/>
</dbReference>
<dbReference type="InterPro" id="IPR003676">
    <property type="entry name" value="SAUR_fam"/>
</dbReference>
<dbReference type="PANTHER" id="PTHR31929">
    <property type="entry name" value="SAUR-LIKE AUXIN-RESPONSIVE PROTEIN FAMILY-RELATED"/>
    <property type="match status" value="1"/>
</dbReference>
<dbReference type="Pfam" id="PF02519">
    <property type="entry name" value="Auxin_inducible"/>
    <property type="match status" value="1"/>
</dbReference>
<organism>
    <name type="scientific">Arabidopsis thaliana</name>
    <name type="common">Mouse-ear cress</name>
    <dbReference type="NCBI Taxonomy" id="3702"/>
    <lineage>
        <taxon>Eukaryota</taxon>
        <taxon>Viridiplantae</taxon>
        <taxon>Streptophyta</taxon>
        <taxon>Embryophyta</taxon>
        <taxon>Tracheophyta</taxon>
        <taxon>Spermatophyta</taxon>
        <taxon>Magnoliopsida</taxon>
        <taxon>eudicotyledons</taxon>
        <taxon>Gunneridae</taxon>
        <taxon>Pentapetalae</taxon>
        <taxon>rosids</taxon>
        <taxon>malvids</taxon>
        <taxon>Brassicales</taxon>
        <taxon>Brassicaceae</taxon>
        <taxon>Camelineae</taxon>
        <taxon>Arabidopsis</taxon>
    </lineage>
</organism>
<gene>
    <name evidence="5" type="primary">SAUR28</name>
    <name evidence="8" type="ordered locus">At3g03830</name>
    <name evidence="9" type="ORF">F20H23.15</name>
</gene>
<sequence length="92" mass="10284">MALVRSIFSAKKILGGSLARTSKAPKGFLAVYVGENQEKKQRYFVPVSYLKQPSFQALLSKCEEEFGFDHPMGGLTICCPEYTFISITSRIQ</sequence>
<proteinExistence type="evidence at transcript level"/>
<feature type="chain" id="PRO_0000441619" description="Auxin-responsive protein SAUR28">
    <location>
        <begin position="1"/>
        <end position="92"/>
    </location>
</feature>
<accession>Q9SRW0</accession>
<name>SAU28_ARATH</name>
<keyword id="KW-0927">Auxin signaling pathway</keyword>
<keyword id="KW-1003">Cell membrane</keyword>
<keyword id="KW-0217">Developmental protein</keyword>
<keyword id="KW-0341">Growth regulation</keyword>
<keyword id="KW-0472">Membrane</keyword>
<keyword id="KW-1185">Reference proteome</keyword>
<reference key="1">
    <citation type="journal article" date="2000" name="Nature">
        <title>Sequence and analysis of chromosome 3 of the plant Arabidopsis thaliana.</title>
        <authorList>
            <person name="Salanoubat M."/>
            <person name="Lemcke K."/>
            <person name="Rieger M."/>
            <person name="Ansorge W."/>
            <person name="Unseld M."/>
            <person name="Fartmann B."/>
            <person name="Valle G."/>
            <person name="Bloecker H."/>
            <person name="Perez-Alonso M."/>
            <person name="Obermaier B."/>
            <person name="Delseny M."/>
            <person name="Boutry M."/>
            <person name="Grivell L.A."/>
            <person name="Mache R."/>
            <person name="Puigdomenech P."/>
            <person name="De Simone V."/>
            <person name="Choisne N."/>
            <person name="Artiguenave F."/>
            <person name="Robert C."/>
            <person name="Brottier P."/>
            <person name="Wincker P."/>
            <person name="Cattolico L."/>
            <person name="Weissenbach J."/>
            <person name="Saurin W."/>
            <person name="Quetier F."/>
            <person name="Schaefer M."/>
            <person name="Mueller-Auer S."/>
            <person name="Gabel C."/>
            <person name="Fuchs M."/>
            <person name="Benes V."/>
            <person name="Wurmbach E."/>
            <person name="Drzonek H."/>
            <person name="Erfle H."/>
            <person name="Jordan N."/>
            <person name="Bangert S."/>
            <person name="Wiedelmann R."/>
            <person name="Kranz H."/>
            <person name="Voss H."/>
            <person name="Holland R."/>
            <person name="Brandt P."/>
            <person name="Nyakatura G."/>
            <person name="Vezzi A."/>
            <person name="D'Angelo M."/>
            <person name="Pallavicini A."/>
            <person name="Toppo S."/>
            <person name="Simionati B."/>
            <person name="Conrad A."/>
            <person name="Hornischer K."/>
            <person name="Kauer G."/>
            <person name="Loehnert T.-H."/>
            <person name="Nordsiek G."/>
            <person name="Reichelt J."/>
            <person name="Scharfe M."/>
            <person name="Schoen O."/>
            <person name="Bargues M."/>
            <person name="Terol J."/>
            <person name="Climent J."/>
            <person name="Navarro P."/>
            <person name="Collado C."/>
            <person name="Perez-Perez A."/>
            <person name="Ottenwaelder B."/>
            <person name="Duchemin D."/>
            <person name="Cooke R."/>
            <person name="Laudie M."/>
            <person name="Berger-Llauro C."/>
            <person name="Purnelle B."/>
            <person name="Masuy D."/>
            <person name="de Haan M."/>
            <person name="Maarse A.C."/>
            <person name="Alcaraz J.-P."/>
            <person name="Cottet A."/>
            <person name="Casacuberta E."/>
            <person name="Monfort A."/>
            <person name="Argiriou A."/>
            <person name="Flores M."/>
            <person name="Liguori R."/>
            <person name="Vitale D."/>
            <person name="Mannhaupt G."/>
            <person name="Haase D."/>
            <person name="Schoof H."/>
            <person name="Rudd S."/>
            <person name="Zaccaria P."/>
            <person name="Mewes H.-W."/>
            <person name="Mayer K.F.X."/>
            <person name="Kaul S."/>
            <person name="Town C.D."/>
            <person name="Koo H.L."/>
            <person name="Tallon L.J."/>
            <person name="Jenkins J."/>
            <person name="Rooney T."/>
            <person name="Rizzo M."/>
            <person name="Walts A."/>
            <person name="Utterback T."/>
            <person name="Fujii C.Y."/>
            <person name="Shea T.P."/>
            <person name="Creasy T.H."/>
            <person name="Haas B."/>
            <person name="Maiti R."/>
            <person name="Wu D."/>
            <person name="Peterson J."/>
            <person name="Van Aken S."/>
            <person name="Pai G."/>
            <person name="Militscher J."/>
            <person name="Sellers P."/>
            <person name="Gill J.E."/>
            <person name="Feldblyum T.V."/>
            <person name="Preuss D."/>
            <person name="Lin X."/>
            <person name="Nierman W.C."/>
            <person name="Salzberg S.L."/>
            <person name="White O."/>
            <person name="Venter J.C."/>
            <person name="Fraser C.M."/>
            <person name="Kaneko T."/>
            <person name="Nakamura Y."/>
            <person name="Sato S."/>
            <person name="Kato T."/>
            <person name="Asamizu E."/>
            <person name="Sasamoto S."/>
            <person name="Kimura T."/>
            <person name="Idesawa K."/>
            <person name="Kawashima K."/>
            <person name="Kishida Y."/>
            <person name="Kiyokawa C."/>
            <person name="Kohara M."/>
            <person name="Matsumoto M."/>
            <person name="Matsuno A."/>
            <person name="Muraki A."/>
            <person name="Nakayama S."/>
            <person name="Nakazaki N."/>
            <person name="Shinpo S."/>
            <person name="Takeuchi C."/>
            <person name="Wada T."/>
            <person name="Watanabe A."/>
            <person name="Yamada M."/>
            <person name="Yasuda M."/>
            <person name="Tabata S."/>
        </authorList>
    </citation>
    <scope>NUCLEOTIDE SEQUENCE [LARGE SCALE GENOMIC DNA]</scope>
    <source>
        <strain>cv. Columbia</strain>
    </source>
</reference>
<reference key="2">
    <citation type="journal article" date="2017" name="Plant J.">
        <title>Araport11: a complete reannotation of the Arabidopsis thaliana reference genome.</title>
        <authorList>
            <person name="Cheng C.Y."/>
            <person name="Krishnakumar V."/>
            <person name="Chan A.P."/>
            <person name="Thibaud-Nissen F."/>
            <person name="Schobel S."/>
            <person name="Town C.D."/>
        </authorList>
    </citation>
    <scope>GENOME REANNOTATION</scope>
    <source>
        <strain>cv. Columbia</strain>
    </source>
</reference>
<reference key="3">
    <citation type="journal article" date="2002" name="Science">
        <title>Functional annotation of a full-length Arabidopsis cDNA collection.</title>
        <authorList>
            <person name="Seki M."/>
            <person name="Narusaka M."/>
            <person name="Kamiya A."/>
            <person name="Ishida J."/>
            <person name="Satou M."/>
            <person name="Sakurai T."/>
            <person name="Nakajima M."/>
            <person name="Enju A."/>
            <person name="Akiyama K."/>
            <person name="Oono Y."/>
            <person name="Muramatsu M."/>
            <person name="Hayashizaki Y."/>
            <person name="Kawai J."/>
            <person name="Carninci P."/>
            <person name="Itoh M."/>
            <person name="Ishii Y."/>
            <person name="Arakawa T."/>
            <person name="Shibata K."/>
            <person name="Shinagawa A."/>
            <person name="Shinozaki K."/>
        </authorList>
    </citation>
    <scope>NUCLEOTIDE SEQUENCE [LARGE SCALE MRNA]</scope>
    <source>
        <strain>cv. Columbia</strain>
    </source>
</reference>
<reference key="4">
    <citation type="journal article" date="2003" name="Science">
        <title>Empirical analysis of transcriptional activity in the Arabidopsis genome.</title>
        <authorList>
            <person name="Yamada K."/>
            <person name="Lim J."/>
            <person name="Dale J.M."/>
            <person name="Chen H."/>
            <person name="Shinn P."/>
            <person name="Palm C.J."/>
            <person name="Southwick A.M."/>
            <person name="Wu H.C."/>
            <person name="Kim C.J."/>
            <person name="Nguyen M."/>
            <person name="Pham P.K."/>
            <person name="Cheuk R.F."/>
            <person name="Karlin-Newmann G."/>
            <person name="Liu S.X."/>
            <person name="Lam B."/>
            <person name="Sakano H."/>
            <person name="Wu T."/>
            <person name="Yu G."/>
            <person name="Miranda M."/>
            <person name="Quach H.L."/>
            <person name="Tripp M."/>
            <person name="Chang C.H."/>
            <person name="Lee J.M."/>
            <person name="Toriumi M.J."/>
            <person name="Chan M.M."/>
            <person name="Tang C.C."/>
            <person name="Onodera C.S."/>
            <person name="Deng J.M."/>
            <person name="Akiyama K."/>
            <person name="Ansari Y."/>
            <person name="Arakawa T."/>
            <person name="Banh J."/>
            <person name="Banno F."/>
            <person name="Bowser L."/>
            <person name="Brooks S.Y."/>
            <person name="Carninci P."/>
            <person name="Chao Q."/>
            <person name="Choy N."/>
            <person name="Enju A."/>
            <person name="Goldsmith A.D."/>
            <person name="Gurjal M."/>
            <person name="Hansen N.F."/>
            <person name="Hayashizaki Y."/>
            <person name="Johnson-Hopson C."/>
            <person name="Hsuan V.W."/>
            <person name="Iida K."/>
            <person name="Karnes M."/>
            <person name="Khan S."/>
            <person name="Koesema E."/>
            <person name="Ishida J."/>
            <person name="Jiang P.X."/>
            <person name="Jones T."/>
            <person name="Kawai J."/>
            <person name="Kamiya A."/>
            <person name="Meyers C."/>
            <person name="Nakajima M."/>
            <person name="Narusaka M."/>
            <person name="Seki M."/>
            <person name="Sakurai T."/>
            <person name="Satou M."/>
            <person name="Tamse R."/>
            <person name="Vaysberg M."/>
            <person name="Wallender E.K."/>
            <person name="Wong C."/>
            <person name="Yamamura Y."/>
            <person name="Yuan S."/>
            <person name="Shinozaki K."/>
            <person name="Davis R.W."/>
            <person name="Theologis A."/>
            <person name="Ecker J.R."/>
        </authorList>
    </citation>
    <scope>NUCLEOTIDE SEQUENCE [LARGE SCALE MRNA]</scope>
    <source>
        <strain>cv. Columbia</strain>
    </source>
</reference>
<reference key="5">
    <citation type="journal article" date="2002" name="Plant Mol. Biol.">
        <title>Auxin-responsive gene expression: genes, promoters and regulatory factors.</title>
        <authorList>
            <person name="Hagen G."/>
            <person name="Guilfoyle T.J."/>
        </authorList>
    </citation>
    <scope>GENE FAMILY</scope>
    <scope>NOMENCLATURE</scope>
</reference>
<reference key="6">
    <citation type="journal article" date="2003" name="Science">
        <title>SIR1, an upstream component in auxin signaling identified by chemical genetics.</title>
        <authorList>
            <person name="Zhao Y."/>
            <person name="Dai X."/>
            <person name="Blackwell H.E."/>
            <person name="Schreiber S.L."/>
            <person name="Chory J."/>
        </authorList>
    </citation>
    <scope>INDUCTION BY SIRTINOL AND AUXIN</scope>
</reference>
<reference key="7">
    <citation type="journal article" date="2005" name="Plant Cell">
        <title>Control of root cap formation by MicroRNA-targeted auxin response factors in Arabidopsis.</title>
        <authorList>
            <person name="Wang J.-W."/>
            <person name="Wang L.-J."/>
            <person name="Mao Y.-B."/>
            <person name="Cai W.-J."/>
            <person name="Xue H.-W."/>
            <person name="Chen X.-Y."/>
        </authorList>
    </citation>
    <scope>INDUCTION BY AUXIN</scope>
    <source>
        <strain>cv. Columbia</strain>
    </source>
</reference>
<reference key="8">
    <citation type="journal article" date="2006" name="Cell">
        <title>Different plant hormones regulate similar processes through largely nonoverlapping transcriptional responses.</title>
        <authorList>
            <person name="Nemhauser J.L."/>
            <person name="Hong F."/>
            <person name="Chory J."/>
        </authorList>
    </citation>
    <scope>REVIEW</scope>
</reference>
<reference key="9">
    <citation type="journal article" date="2006" name="Plant J.">
        <title>Characterization of a novel putative zinc finger gene MIF1: involvement in multiple hormonal regulation of Arabidopsis development.</title>
        <authorList>
            <person name="Hu W."/>
            <person name="Ma H."/>
        </authorList>
    </citation>
    <scope>INDUCTION BY DARK</scope>
</reference>
<reference key="10">
    <citation type="journal article" date="2012" name="Plant J.">
        <title>The SAUR19 subfamily of SMALL AUXIN UP RNA genes promote cell expansion.</title>
        <authorList>
            <person name="Spartz A.K."/>
            <person name="Lee S.H."/>
            <person name="Wenger J.P."/>
            <person name="Gonzalez N."/>
            <person name="Itoh H."/>
            <person name="Inze D."/>
            <person name="Peer W.A."/>
            <person name="Murphy A.S."/>
            <person name="Overvoorde P.J."/>
            <person name="Gray W.M."/>
        </authorList>
    </citation>
    <scope>GENE FAMILY</scope>
    <source>
        <strain>cv. Columbia</strain>
    </source>
</reference>
<reference key="11">
    <citation type="journal article" date="2019" name="New Phytol.">
        <title>Natural variations of growth thermo-responsiveness determined by SAUR26/27/28 proteins in Arabidopsis thaliana.</title>
        <authorList>
            <person name="Wang Z."/>
            <person name="Yang L."/>
            <person name="Liu Z."/>
            <person name="Lu M."/>
            <person name="Wang M."/>
            <person name="Sun Q."/>
            <person name="Lan Y."/>
            <person name="Shi T."/>
            <person name="Wu D."/>
            <person name="Hua J."/>
        </authorList>
    </citation>
    <scope>FUNCTION</scope>
    <scope>DISRUPTION PHENOTYPE</scope>
    <scope>INDUCTION BY TEMPERATURE AND PIF4</scope>
    <scope>TISSUE SPECIFICITY</scope>
    <source>
        <strain>cv. Alst-1</strain>
        <strain>cv. Ang-0</strain>
        <strain>cv. Columbia</strain>
        <strain>cv. Com-0</strain>
        <strain>cv. Dja-1</strain>
        <strain>cv. El-0</strain>
        <strain>cv. Kon</strain>
    </source>
</reference>
<comment type="function">
    <text evidence="1 4">Functions as a positive effector of cell expansion through modulation of auxin transport (By similarity). Involved in thermo-responsiveness of plant architecture (PubMed:31127632). Enhances plasma membrane H(+)-ATPase (PubMed:31127632).</text>
</comment>
<comment type="subcellular location">
    <subcellularLocation>
        <location evidence="1">Cell membrane</location>
        <topology evidence="1">Peripheral membrane protein</topology>
    </subcellularLocation>
</comment>
<comment type="tissue specificity">
    <text evidence="4">Higher expression in thermo-responsive cultivars (e.g. cv. Alst-1, cv. Ang-0 and cv. Com-0) than in low thermo-responsive cultivars (e.g. cv. Dja-1, cv. El-0 and cv. Kon).</text>
</comment>
<comment type="induction">
    <text evidence="2 3 4 6">Accumulates in response to sirtinol (a small molecule that activates many auxin-inducible genes and responses) and auxin (PubMed:12893885, PubMed:16006581). Expressed in the dark (PubMed:16412086). PIF4-dependent regulation by temperature (PubMed:31127632). In low thermo-responsive cultivars (e.g. Col-0), higher expression at 28 degrees Celsius than at 22 degrees Celsius in petioles but not in leaf blades (PubMed:31127632). In high thermo-responsive cultivars (e.g. cv. Alst-1 and cv. Ang-0) higher expression at 28 degrees Celsius than at 22 degrees Celsius in both petioles and leaf blades (PubMed:31127632).</text>
</comment>
<comment type="disruption phenotype">
    <text evidence="4">Reduced rosette weight and area at 22 degrees Celsius but not at 28 degrees Celsius.</text>
</comment>
<comment type="miscellaneous">
    <text evidence="4">Exhibits a high natural sequence polymorphism between cultivars, thus conferring thermo-adaptation to environmental conditions.</text>
</comment>
<comment type="similarity">
    <text evidence="7">Belongs to the ARG7 family.</text>
</comment>
<evidence type="ECO:0000250" key="1">
    <source>
        <dbReference type="UniProtKB" id="Q9FJG1"/>
    </source>
</evidence>
<evidence type="ECO:0000269" key="2">
    <source>
    </source>
</evidence>
<evidence type="ECO:0000269" key="3">
    <source>
    </source>
</evidence>
<evidence type="ECO:0000269" key="4">
    <source>
    </source>
</evidence>
<evidence type="ECO:0000303" key="5">
    <source>
    </source>
</evidence>
<evidence type="ECO:0000303" key="6">
    <source>
    </source>
</evidence>
<evidence type="ECO:0000305" key="7"/>
<evidence type="ECO:0000312" key="8">
    <source>
        <dbReference type="Araport" id="AT3G03830"/>
    </source>
</evidence>
<evidence type="ECO:0000312" key="9">
    <source>
        <dbReference type="EMBL" id="AAF00635.1"/>
    </source>
</evidence>